<reference key="1">
    <citation type="journal article" date="2002" name="Proc. Natl. Acad. Sci. U.S.A.">
        <title>Complete genome sequence and comparative genomic analysis of an emerging human pathogen, serotype V Streptococcus agalactiae.</title>
        <authorList>
            <person name="Tettelin H."/>
            <person name="Masignani V."/>
            <person name="Cieslewicz M.J."/>
            <person name="Eisen J.A."/>
            <person name="Peterson S.N."/>
            <person name="Wessels M.R."/>
            <person name="Paulsen I.T."/>
            <person name="Nelson K.E."/>
            <person name="Margarit I."/>
            <person name="Read T.D."/>
            <person name="Madoff L.C."/>
            <person name="Wolf A.M."/>
            <person name="Beanan M.J."/>
            <person name="Brinkac L.M."/>
            <person name="Daugherty S.C."/>
            <person name="DeBoy R.T."/>
            <person name="Durkin A.S."/>
            <person name="Kolonay J.F."/>
            <person name="Madupu R."/>
            <person name="Lewis M.R."/>
            <person name="Radune D."/>
            <person name="Fedorova N.B."/>
            <person name="Scanlan D."/>
            <person name="Khouri H.M."/>
            <person name="Mulligan S."/>
            <person name="Carty H.A."/>
            <person name="Cline R.T."/>
            <person name="Van Aken S.E."/>
            <person name="Gill J."/>
            <person name="Scarselli M."/>
            <person name="Mora M."/>
            <person name="Iacobini E.T."/>
            <person name="Brettoni C."/>
            <person name="Galli G."/>
            <person name="Mariani M."/>
            <person name="Vegni F."/>
            <person name="Maione D."/>
            <person name="Rinaudo D."/>
            <person name="Rappuoli R."/>
            <person name="Telford J.L."/>
            <person name="Kasper D.L."/>
            <person name="Grandi G."/>
            <person name="Fraser C.M."/>
        </authorList>
    </citation>
    <scope>NUCLEOTIDE SEQUENCE [LARGE SCALE GENOMIC DNA]</scope>
    <source>
        <strain>ATCC BAA-611 / 2603 V/R</strain>
    </source>
</reference>
<gene>
    <name evidence="1" type="primary">infC</name>
    <name type="ordered locus">SAG1384</name>
</gene>
<feature type="chain" id="PRO_0000177584" description="Translation initiation factor IF-3">
    <location>
        <begin position="1"/>
        <end position="176"/>
    </location>
</feature>
<protein>
    <recommendedName>
        <fullName evidence="1">Translation initiation factor IF-3</fullName>
    </recommendedName>
</protein>
<organism>
    <name type="scientific">Streptococcus agalactiae serotype V (strain ATCC BAA-611 / 2603 V/R)</name>
    <dbReference type="NCBI Taxonomy" id="208435"/>
    <lineage>
        <taxon>Bacteria</taxon>
        <taxon>Bacillati</taxon>
        <taxon>Bacillota</taxon>
        <taxon>Bacilli</taxon>
        <taxon>Lactobacillales</taxon>
        <taxon>Streptococcaceae</taxon>
        <taxon>Streptococcus</taxon>
    </lineage>
</organism>
<sequence>MKIIAKKDLFINDEIRVREVRLVGLEGEQLGIKPLSEAQAIADDANVDLVLIQPQATPPVAKIMDYGKFKFEYQKKQKEQRKKQSVVTVKEVRLSPVIDKGDFETKLRNGRKFLEKGNKVKVSIRFKGRMITHKEIGAKVLAEFAEATQDIAIIEQRAKMDGRQMFMQLAPIPDKK</sequence>
<accession>P65143</accession>
<accession>Q8DYT9</accession>
<accession>Q8E4E7</accession>
<comment type="function">
    <text evidence="1">IF-3 binds to the 30S ribosomal subunit and shifts the equilibrium between 70S ribosomes and their 50S and 30S subunits in favor of the free subunits, thus enhancing the availability of 30S subunits on which protein synthesis initiation begins.</text>
</comment>
<comment type="subunit">
    <text evidence="1">Monomer.</text>
</comment>
<comment type="subcellular location">
    <subcellularLocation>
        <location evidence="1">Cytoplasm</location>
    </subcellularLocation>
</comment>
<comment type="similarity">
    <text evidence="1">Belongs to the IF-3 family.</text>
</comment>
<name>IF3_STRA5</name>
<proteinExistence type="inferred from homology"/>
<dbReference type="EMBL" id="AE009948">
    <property type="protein sequence ID" value="AAN00255.1"/>
    <property type="molecule type" value="Genomic_DNA"/>
</dbReference>
<dbReference type="RefSeq" id="NP_688382.1">
    <property type="nucleotide sequence ID" value="NC_004116.1"/>
</dbReference>
<dbReference type="RefSeq" id="WP_000691023.1">
    <property type="nucleotide sequence ID" value="NC_004116.1"/>
</dbReference>
<dbReference type="SMR" id="P65143"/>
<dbReference type="STRING" id="208435.SAG1384"/>
<dbReference type="GeneID" id="66886260"/>
<dbReference type="KEGG" id="sag:SAG1384"/>
<dbReference type="PATRIC" id="fig|208435.3.peg.1392"/>
<dbReference type="HOGENOM" id="CLU_054919_3_2_9"/>
<dbReference type="OrthoDB" id="9806014at2"/>
<dbReference type="Proteomes" id="UP000000821">
    <property type="component" value="Chromosome"/>
</dbReference>
<dbReference type="GO" id="GO:0005829">
    <property type="term" value="C:cytosol"/>
    <property type="evidence" value="ECO:0007669"/>
    <property type="project" value="TreeGrafter"/>
</dbReference>
<dbReference type="GO" id="GO:0016020">
    <property type="term" value="C:membrane"/>
    <property type="evidence" value="ECO:0007669"/>
    <property type="project" value="TreeGrafter"/>
</dbReference>
<dbReference type="GO" id="GO:0043022">
    <property type="term" value="F:ribosome binding"/>
    <property type="evidence" value="ECO:0007669"/>
    <property type="project" value="TreeGrafter"/>
</dbReference>
<dbReference type="GO" id="GO:0003743">
    <property type="term" value="F:translation initiation factor activity"/>
    <property type="evidence" value="ECO:0007669"/>
    <property type="project" value="UniProtKB-UniRule"/>
</dbReference>
<dbReference type="GO" id="GO:0032790">
    <property type="term" value="P:ribosome disassembly"/>
    <property type="evidence" value="ECO:0007669"/>
    <property type="project" value="TreeGrafter"/>
</dbReference>
<dbReference type="FunFam" id="3.10.20.80:FF:000001">
    <property type="entry name" value="Translation initiation factor IF-3"/>
    <property type="match status" value="1"/>
</dbReference>
<dbReference type="FunFam" id="3.30.110.10:FF:000001">
    <property type="entry name" value="Translation initiation factor IF-3"/>
    <property type="match status" value="1"/>
</dbReference>
<dbReference type="Gene3D" id="3.30.110.10">
    <property type="entry name" value="Translation initiation factor 3 (IF-3), C-terminal domain"/>
    <property type="match status" value="1"/>
</dbReference>
<dbReference type="Gene3D" id="3.10.20.80">
    <property type="entry name" value="Translation initiation factor 3 (IF-3), N-terminal domain"/>
    <property type="match status" value="1"/>
</dbReference>
<dbReference type="HAMAP" id="MF_00080">
    <property type="entry name" value="IF_3"/>
    <property type="match status" value="1"/>
</dbReference>
<dbReference type="InterPro" id="IPR036788">
    <property type="entry name" value="T_IF-3_C_sf"/>
</dbReference>
<dbReference type="InterPro" id="IPR036787">
    <property type="entry name" value="T_IF-3_N_sf"/>
</dbReference>
<dbReference type="InterPro" id="IPR019813">
    <property type="entry name" value="Translation_initiation_fac3_CS"/>
</dbReference>
<dbReference type="InterPro" id="IPR001288">
    <property type="entry name" value="Translation_initiation_fac_3"/>
</dbReference>
<dbReference type="InterPro" id="IPR019815">
    <property type="entry name" value="Translation_initiation_fac_3_C"/>
</dbReference>
<dbReference type="InterPro" id="IPR019814">
    <property type="entry name" value="Translation_initiation_fac_3_N"/>
</dbReference>
<dbReference type="NCBIfam" id="TIGR00168">
    <property type="entry name" value="infC"/>
    <property type="match status" value="1"/>
</dbReference>
<dbReference type="PANTHER" id="PTHR10938">
    <property type="entry name" value="TRANSLATION INITIATION FACTOR IF-3"/>
    <property type="match status" value="1"/>
</dbReference>
<dbReference type="PANTHER" id="PTHR10938:SF0">
    <property type="entry name" value="TRANSLATION INITIATION FACTOR IF-3, MITOCHONDRIAL"/>
    <property type="match status" value="1"/>
</dbReference>
<dbReference type="Pfam" id="PF00707">
    <property type="entry name" value="IF3_C"/>
    <property type="match status" value="1"/>
</dbReference>
<dbReference type="Pfam" id="PF05198">
    <property type="entry name" value="IF3_N"/>
    <property type="match status" value="1"/>
</dbReference>
<dbReference type="SUPFAM" id="SSF55200">
    <property type="entry name" value="Translation initiation factor IF3, C-terminal domain"/>
    <property type="match status" value="1"/>
</dbReference>
<dbReference type="SUPFAM" id="SSF54364">
    <property type="entry name" value="Translation initiation factor IF3, N-terminal domain"/>
    <property type="match status" value="1"/>
</dbReference>
<dbReference type="PROSITE" id="PS00938">
    <property type="entry name" value="IF3"/>
    <property type="match status" value="1"/>
</dbReference>
<evidence type="ECO:0000255" key="1">
    <source>
        <dbReference type="HAMAP-Rule" id="MF_00080"/>
    </source>
</evidence>
<keyword id="KW-0963">Cytoplasm</keyword>
<keyword id="KW-0396">Initiation factor</keyword>
<keyword id="KW-0648">Protein biosynthesis</keyword>
<keyword id="KW-1185">Reference proteome</keyword>